<accession>P50997</accession>
<sequence>MGKGVGRDKYEPAAVSEHGDKKKAKKERDMDELKKEVSMDDHKLSLDELHRKYGTDLSRGLTTARAAEILARDGPNALTPPPTTPEWVKFCRQLFGGFSMLLWIGAILCFLAYGIQAATEEEPQNDNLYLGVVLSAVVIITGCFSYYQEAKSSKIMESFKNMVPQQALVIRNGEKMSINAEEVVIGDLVEVKGGDRIPADLRIISANGCKVDNSSLTGESEPQTRSPDFTNENPLETRNIAFFSTNCVKGTARGIVVYTGDRTVMGRIATLASGLEGGQTPIAAEIEHFIHIITGVAVFLGVSFFILSLILEYTWLEAVIFLIGIIVANVPEGLLATVTVCLTLTAKRMARKNCLVKNLEAVETLGSTSTICSDKTGTLTQNRMTVAHMWFDNQIHEADTTENQSGVSFDKSSATWLALSRIAGLCNRAVFQANQENLPILKRAVAGDASESALLKCIELCCGSVKEMRDRYAKIVEIPFNSTNKYQLSIHKNPNTSEPRHLLVMKGAPERILDRCSSILLHGKEQPLDEELKDALQNAYLELGGLGERVLGFRHLFLPDEQFPEGFQFDTDDVNFPVENLCFVGFISMIGPPRAAVPDAVGKCRGAGIKVIMVTGDHPITAKAIAKGAGIISEGNETVEDIAARLNIPVRQVNPRDAKACVVHGSDLKDMTSEQLDGILKYHTEIVFARTSPQQKLIIVEGCQRQGAIVAVTGDGVNDSPALKKADIGVAMGIVGSDASKQAADMILLDDNFASIVTGVEEGRLIFDNLKKSIAYTLTSNIPEITPFLIFIIANIPLPLGTVTILCIDLGTDMVPAISLAYEQAESDIMKRQPRNPKTDKLVNERLISMAYGQIGMIQALGGFFTYFVILAENGFLPTHLLGLRVDWDDRWINDVEDSYGQQWTYEQRKIVEFTCHTAFFVSIVVVQWADLVICKTRRNSVFQQGMKNKILIFGLFEETALAAFLSYCPGMGVALRMYPLKPTWWFCAFPYSLLIFVYDEVRKLIIRRRPGGWVEKETYY</sequence>
<protein>
    <recommendedName>
        <fullName>Sodium/potassium-transporting ATPase subunit alpha-1</fullName>
        <shortName>Na(+)/K(+) ATPase alpha-1 subunit</shortName>
        <ecNumber>7.2.2.13</ecNumber>
    </recommendedName>
    <alternativeName>
        <fullName>Sodium pump subunit alpha-1</fullName>
    </alternativeName>
</protein>
<keyword id="KW-0007">Acetylation</keyword>
<keyword id="KW-0067">ATP-binding</keyword>
<keyword id="KW-1003">Cell membrane</keyword>
<keyword id="KW-0966">Cell projection</keyword>
<keyword id="KW-0406">Ion transport</keyword>
<keyword id="KW-0460">Magnesium</keyword>
<keyword id="KW-0472">Membrane</keyword>
<keyword id="KW-0479">Metal-binding</keyword>
<keyword id="KW-0547">Nucleotide-binding</keyword>
<keyword id="KW-0597">Phosphoprotein</keyword>
<keyword id="KW-0630">Potassium</keyword>
<keyword id="KW-0633">Potassium transport</keyword>
<keyword id="KW-1185">Reference proteome</keyword>
<keyword id="KW-0915">Sodium</keyword>
<keyword id="KW-0739">Sodium transport</keyword>
<keyword id="KW-0740">Sodium/potassium transport</keyword>
<keyword id="KW-1278">Translocase</keyword>
<keyword id="KW-0812">Transmembrane</keyword>
<keyword id="KW-1133">Transmembrane helix</keyword>
<keyword id="KW-0813">Transport</keyword>
<organism>
    <name type="scientific">Canis lupus familiaris</name>
    <name type="common">Dog</name>
    <name type="synonym">Canis familiaris</name>
    <dbReference type="NCBI Taxonomy" id="9615"/>
    <lineage>
        <taxon>Eukaryota</taxon>
        <taxon>Metazoa</taxon>
        <taxon>Chordata</taxon>
        <taxon>Craniata</taxon>
        <taxon>Vertebrata</taxon>
        <taxon>Euteleostomi</taxon>
        <taxon>Mammalia</taxon>
        <taxon>Eutheria</taxon>
        <taxon>Laurasiatheria</taxon>
        <taxon>Carnivora</taxon>
        <taxon>Caniformia</taxon>
        <taxon>Canidae</taxon>
        <taxon>Canis</taxon>
    </lineage>
</organism>
<dbReference type="EC" id="7.2.2.13"/>
<dbReference type="EMBL" id="L42173">
    <property type="protein sequence ID" value="AAA67372.1"/>
    <property type="molecule type" value="mRNA"/>
</dbReference>
<dbReference type="EMBL" id="X66174">
    <property type="protein sequence ID" value="CAA46950.1"/>
    <property type="molecule type" value="mRNA"/>
</dbReference>
<dbReference type="RefSeq" id="NP_001003306.1">
    <property type="nucleotide sequence ID" value="NM_001003306.2"/>
</dbReference>
<dbReference type="SMR" id="P50997"/>
<dbReference type="BioGRID" id="139906">
    <property type="interactions" value="1"/>
</dbReference>
<dbReference type="FunCoup" id="P50997">
    <property type="interactions" value="761"/>
</dbReference>
<dbReference type="STRING" id="9615.ENSCAFP00000047882"/>
<dbReference type="BindingDB" id="P50997"/>
<dbReference type="ChEMBL" id="CHEMBL4838"/>
<dbReference type="DrugCentral" id="P50997"/>
<dbReference type="PaxDb" id="9612-ENSCAFP00000038629"/>
<dbReference type="eggNOG" id="KOG0203">
    <property type="taxonomic scope" value="Eukaryota"/>
</dbReference>
<dbReference type="InParanoid" id="P50997"/>
<dbReference type="OrthoDB" id="3352408at2759"/>
<dbReference type="PRO" id="PR:P50997"/>
<dbReference type="Proteomes" id="UP000002254">
    <property type="component" value="Unplaced"/>
</dbReference>
<dbReference type="Proteomes" id="UP000694429">
    <property type="component" value="Unplaced"/>
</dbReference>
<dbReference type="Proteomes" id="UP000694542">
    <property type="component" value="Unplaced"/>
</dbReference>
<dbReference type="Proteomes" id="UP000805418">
    <property type="component" value="Unplaced"/>
</dbReference>
<dbReference type="GO" id="GO:0030424">
    <property type="term" value="C:axon"/>
    <property type="evidence" value="ECO:0007669"/>
    <property type="project" value="UniProtKB-SubCell"/>
</dbReference>
<dbReference type="GO" id="GO:0016323">
    <property type="term" value="C:basolateral plasma membrane"/>
    <property type="evidence" value="ECO:0000250"/>
    <property type="project" value="UniProtKB"/>
</dbReference>
<dbReference type="GO" id="GO:0042470">
    <property type="term" value="C:melanosome"/>
    <property type="evidence" value="ECO:0007669"/>
    <property type="project" value="UniProtKB-SubCell"/>
</dbReference>
<dbReference type="GO" id="GO:0016020">
    <property type="term" value="C:membrane"/>
    <property type="evidence" value="ECO:0000250"/>
    <property type="project" value="UniProtKB"/>
</dbReference>
<dbReference type="GO" id="GO:0005886">
    <property type="term" value="C:plasma membrane"/>
    <property type="evidence" value="ECO:0000250"/>
    <property type="project" value="UniProtKB"/>
</dbReference>
<dbReference type="GO" id="GO:0042383">
    <property type="term" value="C:sarcolemma"/>
    <property type="evidence" value="ECO:0000318"/>
    <property type="project" value="GO_Central"/>
</dbReference>
<dbReference type="GO" id="GO:0005890">
    <property type="term" value="C:sodium:potassium-exchanging ATPase complex"/>
    <property type="evidence" value="ECO:0000318"/>
    <property type="project" value="GO_Central"/>
</dbReference>
<dbReference type="GO" id="GO:0005524">
    <property type="term" value="F:ATP binding"/>
    <property type="evidence" value="ECO:0007669"/>
    <property type="project" value="UniProtKB-KW"/>
</dbReference>
<dbReference type="GO" id="GO:0016887">
    <property type="term" value="F:ATP hydrolysis activity"/>
    <property type="evidence" value="ECO:0007669"/>
    <property type="project" value="InterPro"/>
</dbReference>
<dbReference type="GO" id="GO:0046872">
    <property type="term" value="F:metal ion binding"/>
    <property type="evidence" value="ECO:0007669"/>
    <property type="project" value="UniProtKB-KW"/>
</dbReference>
<dbReference type="GO" id="GO:0005391">
    <property type="term" value="F:P-type sodium:potassium-exchanging transporter activity"/>
    <property type="evidence" value="ECO:0000250"/>
    <property type="project" value="UniProtKB"/>
</dbReference>
<dbReference type="GO" id="GO:0030007">
    <property type="term" value="P:intracellular potassium ion homeostasis"/>
    <property type="evidence" value="ECO:0000318"/>
    <property type="project" value="GO_Central"/>
</dbReference>
<dbReference type="GO" id="GO:0006883">
    <property type="term" value="P:intracellular sodium ion homeostasis"/>
    <property type="evidence" value="ECO:0000318"/>
    <property type="project" value="GO_Central"/>
</dbReference>
<dbReference type="GO" id="GO:1990573">
    <property type="term" value="P:potassium ion import across plasma membrane"/>
    <property type="evidence" value="ECO:0000318"/>
    <property type="project" value="GO_Central"/>
</dbReference>
<dbReference type="GO" id="GO:1902600">
    <property type="term" value="P:proton transmembrane transport"/>
    <property type="evidence" value="ECO:0000318"/>
    <property type="project" value="GO_Central"/>
</dbReference>
<dbReference type="GO" id="GO:0002028">
    <property type="term" value="P:regulation of sodium ion transport"/>
    <property type="evidence" value="ECO:0000250"/>
    <property type="project" value="UniProtKB"/>
</dbReference>
<dbReference type="GO" id="GO:0036376">
    <property type="term" value="P:sodium ion export across plasma membrane"/>
    <property type="evidence" value="ECO:0000318"/>
    <property type="project" value="GO_Central"/>
</dbReference>
<dbReference type="CDD" id="cd02608">
    <property type="entry name" value="P-type_ATPase_Na-K_like"/>
    <property type="match status" value="1"/>
</dbReference>
<dbReference type="FunFam" id="1.20.1110.10:FF:000163">
    <property type="match status" value="1"/>
</dbReference>
<dbReference type="FunFam" id="2.70.150.10:FF:000106">
    <property type="entry name" value="Sodium/potassium-transporting ATPase subunit alpha"/>
    <property type="match status" value="1"/>
</dbReference>
<dbReference type="FunFam" id="3.40.1110.10:FF:000001">
    <property type="entry name" value="Sodium/potassium-transporting ATPase subunit alpha"/>
    <property type="match status" value="1"/>
</dbReference>
<dbReference type="FunFam" id="3.40.50.1000:FF:000004">
    <property type="entry name" value="Sodium/potassium-transporting ATPase subunit alpha"/>
    <property type="match status" value="1"/>
</dbReference>
<dbReference type="FunFam" id="1.20.1110.10:FF:000095">
    <property type="entry name" value="Sodium/potassium-transporting ATPase subunit alpha-1"/>
    <property type="match status" value="2"/>
</dbReference>
<dbReference type="Gene3D" id="3.40.1110.10">
    <property type="entry name" value="Calcium-transporting ATPase, cytoplasmic domain N"/>
    <property type="match status" value="1"/>
</dbReference>
<dbReference type="Gene3D" id="2.70.150.10">
    <property type="entry name" value="Calcium-transporting ATPase, cytoplasmic transduction domain A"/>
    <property type="match status" value="1"/>
</dbReference>
<dbReference type="Gene3D" id="1.20.1110.10">
    <property type="entry name" value="Calcium-transporting ATPase, transmembrane domain"/>
    <property type="match status" value="1"/>
</dbReference>
<dbReference type="Gene3D" id="3.40.50.1000">
    <property type="entry name" value="HAD superfamily/HAD-like"/>
    <property type="match status" value="1"/>
</dbReference>
<dbReference type="InterPro" id="IPR006068">
    <property type="entry name" value="ATPase_P-typ_cation-transptr_C"/>
</dbReference>
<dbReference type="InterPro" id="IPR004014">
    <property type="entry name" value="ATPase_P-typ_cation-transptr_N"/>
</dbReference>
<dbReference type="InterPro" id="IPR023299">
    <property type="entry name" value="ATPase_P-typ_cyto_dom_N"/>
</dbReference>
<dbReference type="InterPro" id="IPR018303">
    <property type="entry name" value="ATPase_P-typ_P_site"/>
</dbReference>
<dbReference type="InterPro" id="IPR023298">
    <property type="entry name" value="ATPase_P-typ_TM_dom_sf"/>
</dbReference>
<dbReference type="InterPro" id="IPR008250">
    <property type="entry name" value="ATPase_P-typ_transduc_dom_A_sf"/>
</dbReference>
<dbReference type="InterPro" id="IPR050510">
    <property type="entry name" value="Cation_transp_ATPase_P-type"/>
</dbReference>
<dbReference type="InterPro" id="IPR036412">
    <property type="entry name" value="HAD-like_sf"/>
</dbReference>
<dbReference type="InterPro" id="IPR023214">
    <property type="entry name" value="HAD_sf"/>
</dbReference>
<dbReference type="InterPro" id="IPR005775">
    <property type="entry name" value="P-type_ATPase_IIC"/>
</dbReference>
<dbReference type="InterPro" id="IPR001757">
    <property type="entry name" value="P_typ_ATPase"/>
</dbReference>
<dbReference type="InterPro" id="IPR044492">
    <property type="entry name" value="P_typ_ATPase_HD_dom"/>
</dbReference>
<dbReference type="NCBIfam" id="TIGR01106">
    <property type="entry name" value="ATPase-IIC_X-K"/>
    <property type="match status" value="1"/>
</dbReference>
<dbReference type="NCBIfam" id="TIGR01494">
    <property type="entry name" value="ATPase_P-type"/>
    <property type="match status" value="2"/>
</dbReference>
<dbReference type="PANTHER" id="PTHR43294">
    <property type="entry name" value="SODIUM/POTASSIUM-TRANSPORTING ATPASE SUBUNIT ALPHA"/>
    <property type="match status" value="1"/>
</dbReference>
<dbReference type="PANTHER" id="PTHR43294:SF9">
    <property type="entry name" value="SODIUM_POTASSIUM-TRANSPORTING ATPASE SUBUNIT ALPHA-1"/>
    <property type="match status" value="1"/>
</dbReference>
<dbReference type="Pfam" id="PF13246">
    <property type="entry name" value="Cation_ATPase"/>
    <property type="match status" value="1"/>
</dbReference>
<dbReference type="Pfam" id="PF00689">
    <property type="entry name" value="Cation_ATPase_C"/>
    <property type="match status" value="1"/>
</dbReference>
<dbReference type="Pfam" id="PF00690">
    <property type="entry name" value="Cation_ATPase_N"/>
    <property type="match status" value="1"/>
</dbReference>
<dbReference type="Pfam" id="PF00122">
    <property type="entry name" value="E1-E2_ATPase"/>
    <property type="match status" value="1"/>
</dbReference>
<dbReference type="PRINTS" id="PR00119">
    <property type="entry name" value="CATATPASE"/>
</dbReference>
<dbReference type="PRINTS" id="PR00121">
    <property type="entry name" value="NAKATPASE"/>
</dbReference>
<dbReference type="SFLD" id="SFLDG00002">
    <property type="entry name" value="C1.7:_P-type_atpase_like"/>
    <property type="match status" value="1"/>
</dbReference>
<dbReference type="SFLD" id="SFLDF00027">
    <property type="entry name" value="p-type_atpase"/>
    <property type="match status" value="1"/>
</dbReference>
<dbReference type="SMART" id="SM00831">
    <property type="entry name" value="Cation_ATPase_N"/>
    <property type="match status" value="1"/>
</dbReference>
<dbReference type="SUPFAM" id="SSF81653">
    <property type="entry name" value="Calcium ATPase, transduction domain A"/>
    <property type="match status" value="1"/>
</dbReference>
<dbReference type="SUPFAM" id="SSF81665">
    <property type="entry name" value="Calcium ATPase, transmembrane domain M"/>
    <property type="match status" value="1"/>
</dbReference>
<dbReference type="SUPFAM" id="SSF56784">
    <property type="entry name" value="HAD-like"/>
    <property type="match status" value="1"/>
</dbReference>
<dbReference type="SUPFAM" id="SSF81660">
    <property type="entry name" value="Metal cation-transporting ATPase, ATP-binding domain N"/>
    <property type="match status" value="1"/>
</dbReference>
<dbReference type="PROSITE" id="PS00154">
    <property type="entry name" value="ATPASE_E1_E2"/>
    <property type="match status" value="1"/>
</dbReference>
<reference key="1">
    <citation type="book" date="1994" name="The sodium pump">
        <title>Cloning of the dog Na/K-ATPase alpha 1 subunit.</title>
        <editorList>
            <person name="Bamberg E."/>
            <person name="Schoner W."/>
        </editorList>
        <authorList>
            <person name="Xie Z."/>
            <person name="Li H."/>
            <person name="Liu G."/>
            <person name="Wang Y."/>
            <person name="Askari A."/>
            <person name="Mercer R.W."/>
        </authorList>
    </citation>
    <scope>NUCLEOTIDE SEQUENCE [MRNA]</scope>
</reference>
<reference key="2">
    <citation type="journal article" date="1992" name="EMBO J.">
        <title>Mutation of a cysteine in the first transmembrane segment of Na,K-ATPase alpha subunit confers ouabain resistance.</title>
        <authorList>
            <person name="Canessa C.M."/>
            <person name="Horisberger J.-D."/>
            <person name="Louvard D."/>
            <person name="Rossier B.C."/>
        </authorList>
    </citation>
    <scope>NUCLEOTIDE SEQUENCE [MRNA] OF 92-311</scope>
    <source>
        <strain>Cocker spaniel</strain>
        <tissue>Kidney</tissue>
    </source>
</reference>
<reference key="3">
    <citation type="journal article" date="2006" name="J. Biol. Chem.">
        <title>Phospholemman phosphorylation alters its fluorescence resonance energy transfer with the Na/K-ATPase pump.</title>
        <authorList>
            <person name="Bossuyt J."/>
            <person name="Despa S."/>
            <person name="Martin J.L."/>
            <person name="Bers D.M."/>
        </authorList>
    </citation>
    <scope>INTERACTION WITH FXYD1</scope>
</reference>
<reference key="4">
    <citation type="journal article" date="2011" name="J. Biol. Chem.">
        <title>FXYD proteins reverse inhibition of the Na+-K+ pump mediated by glutathionylation of its beta1 subunit.</title>
        <authorList>
            <person name="Bibert S."/>
            <person name="Liu C.C."/>
            <person name="Figtree G.A."/>
            <person name="Garcia A."/>
            <person name="Hamilton E.J."/>
            <person name="Marassi F.M."/>
            <person name="Sweadner K.J."/>
            <person name="Cornelius F."/>
            <person name="Geering K."/>
            <person name="Rasmussen H.H."/>
        </authorList>
    </citation>
    <scope>INTERACTION WITH FXYD1</scope>
</reference>
<proteinExistence type="evidence at protein level"/>
<feature type="propeptide" id="PRO_0000002479" evidence="1">
    <location>
        <begin position="1"/>
        <end position="5"/>
    </location>
</feature>
<feature type="chain" id="PRO_0000002480" description="Sodium/potassium-transporting ATPase subunit alpha-1">
    <location>
        <begin position="6"/>
        <end position="1021"/>
    </location>
</feature>
<feature type="topological domain" description="Cytoplasmic" evidence="5">
    <location>
        <begin position="4"/>
        <end position="85"/>
    </location>
</feature>
<feature type="transmembrane region" description="Helical" evidence="5">
    <location>
        <begin position="86"/>
        <end position="106"/>
    </location>
</feature>
<feature type="topological domain" description="Extracellular" evidence="5">
    <location>
        <begin position="107"/>
        <end position="129"/>
    </location>
</feature>
<feature type="transmembrane region" description="Helical" evidence="5">
    <location>
        <begin position="130"/>
        <end position="150"/>
    </location>
</feature>
<feature type="topological domain" description="Cytoplasmic" evidence="5">
    <location>
        <begin position="151"/>
        <end position="286"/>
    </location>
</feature>
<feature type="transmembrane region" description="Helical" evidence="5">
    <location>
        <begin position="287"/>
        <end position="306"/>
    </location>
</feature>
<feature type="topological domain" description="Extracellular" evidence="5">
    <location>
        <begin position="307"/>
        <end position="318"/>
    </location>
</feature>
<feature type="transmembrane region" description="Helical" evidence="5">
    <location>
        <begin position="319"/>
        <end position="336"/>
    </location>
</feature>
<feature type="topological domain" description="Cytoplasmic" evidence="5">
    <location>
        <begin position="337"/>
        <end position="770"/>
    </location>
</feature>
<feature type="transmembrane region" description="Helical" evidence="5">
    <location>
        <begin position="771"/>
        <end position="790"/>
    </location>
</feature>
<feature type="topological domain" description="Extracellular" evidence="5">
    <location>
        <begin position="791"/>
        <end position="800"/>
    </location>
</feature>
<feature type="transmembrane region" description="Helical" evidence="5">
    <location>
        <begin position="801"/>
        <end position="821"/>
    </location>
</feature>
<feature type="topological domain" description="Cytoplasmic" evidence="5">
    <location>
        <begin position="822"/>
        <end position="841"/>
    </location>
</feature>
<feature type="transmembrane region" description="Helical" evidence="5">
    <location>
        <begin position="842"/>
        <end position="864"/>
    </location>
</feature>
<feature type="topological domain" description="Extracellular" evidence="5">
    <location>
        <begin position="865"/>
        <end position="916"/>
    </location>
</feature>
<feature type="transmembrane region" description="Helical" evidence="5">
    <location>
        <begin position="917"/>
        <end position="936"/>
    </location>
</feature>
<feature type="topological domain" description="Cytoplasmic" evidence="5">
    <location>
        <begin position="937"/>
        <end position="949"/>
    </location>
</feature>
<feature type="transmembrane region" description="Helical" evidence="5">
    <location>
        <begin position="950"/>
        <end position="968"/>
    </location>
</feature>
<feature type="topological domain" description="Extracellular" evidence="5">
    <location>
        <begin position="969"/>
        <end position="983"/>
    </location>
</feature>
<feature type="transmembrane region" description="Helical" evidence="5">
    <location>
        <begin position="984"/>
        <end position="1004"/>
    </location>
</feature>
<feature type="topological domain" description="Cytoplasmic" evidence="5">
    <location>
        <begin position="1005"/>
        <end position="1021"/>
    </location>
</feature>
<feature type="region of interest" description="Disordered" evidence="6">
    <location>
        <begin position="1"/>
        <end position="36"/>
    </location>
</feature>
<feature type="region of interest" description="Phosphoinositide-3 kinase binding" evidence="1">
    <location>
        <begin position="80"/>
        <end position="82"/>
    </location>
</feature>
<feature type="region of interest" description="Disordered" evidence="6">
    <location>
        <begin position="214"/>
        <end position="233"/>
    </location>
</feature>
<feature type="region of interest" description="Mediates interaction with SCN7A" evidence="4">
    <location>
        <begin position="594"/>
        <end position="715"/>
    </location>
</feature>
<feature type="compositionally biased region" description="Basic and acidic residues" evidence="6">
    <location>
        <begin position="1"/>
        <end position="11"/>
    </location>
</feature>
<feature type="compositionally biased region" description="Basic and acidic residues" evidence="6">
    <location>
        <begin position="26"/>
        <end position="36"/>
    </location>
</feature>
<feature type="active site" description="4-aspartylphosphate intermediate" evidence="1">
    <location>
        <position position="374"/>
    </location>
</feature>
<feature type="binding site" evidence="1">
    <location>
        <position position="485"/>
    </location>
    <ligand>
        <name>ATP</name>
        <dbReference type="ChEBI" id="CHEBI:30616"/>
    </ligand>
</feature>
<feature type="binding site" evidence="1">
    <location>
        <position position="715"/>
    </location>
    <ligand>
        <name>Mg(2+)</name>
        <dbReference type="ChEBI" id="CHEBI:18420"/>
    </ligand>
</feature>
<feature type="binding site" evidence="1">
    <location>
        <position position="719"/>
    </location>
    <ligand>
        <name>Mg(2+)</name>
        <dbReference type="ChEBI" id="CHEBI:18420"/>
    </ligand>
</feature>
<feature type="modified residue" description="N6-acetyllysine" evidence="4">
    <location>
        <position position="9"/>
    </location>
</feature>
<feature type="modified residue" description="Phosphotyrosine" evidence="3">
    <location>
        <position position="10"/>
    </location>
</feature>
<feature type="modified residue" description="Phosphoserine; by PKC" evidence="3">
    <location>
        <position position="16"/>
    </location>
</feature>
<feature type="modified residue" description="N6-acetyllysine" evidence="4">
    <location>
        <position position="21"/>
    </location>
</feature>
<feature type="modified residue" description="Phosphoserine" evidence="3">
    <location>
        <position position="38"/>
    </location>
</feature>
<feature type="modified residue" description="Phosphoserine" evidence="3">
    <location>
        <position position="45"/>
    </location>
</feature>
<feature type="modified residue" description="Phosphoserine" evidence="4">
    <location>
        <position position="226"/>
    </location>
</feature>
<feature type="modified residue" description="Phosphotyrosine" evidence="4">
    <location>
        <position position="258"/>
    </location>
</feature>
<feature type="modified residue" description="Phosphoserine" evidence="3">
    <location>
        <position position="450"/>
    </location>
</feature>
<feature type="modified residue" description="Phosphoserine" evidence="3">
    <location>
        <position position="482"/>
    </location>
</feature>
<feature type="modified residue" description="Phosphotyrosine" evidence="2">
    <location>
        <position position="540"/>
    </location>
</feature>
<feature type="modified residue" description="N6-succinyllysine" evidence="4">
    <location>
        <position position="659"/>
    </location>
</feature>
<feature type="modified residue" description="Phosphoserine" evidence="4">
    <location>
        <position position="666"/>
    </location>
</feature>
<feature type="modified residue" description="Phosphoserine" evidence="4">
    <location>
        <position position="673"/>
    </location>
</feature>
<feature type="modified residue" description="Phosphoserine; by PKA" evidence="3">
    <location>
        <position position="941"/>
    </location>
</feature>
<feature type="sequence conflict" description="In Ref. 2; CAA46950." evidence="9" ref="2">
    <original>C</original>
    <variation>Y</variation>
    <location>
        <position position="109"/>
    </location>
</feature>
<feature type="sequence conflict" description="In Ref. 2; CAA46950." evidence="9" ref="2">
    <original>I</original>
    <variation>V</variation>
    <location>
        <position position="185"/>
    </location>
</feature>
<feature type="sequence conflict" description="In Ref. 2; CAA46950." evidence="9" ref="2">
    <original>K</original>
    <variation>E</variation>
    <location>
        <position position="249"/>
    </location>
</feature>
<feature type="sequence conflict" description="In Ref. 2; CAA46950." evidence="9" ref="2">
    <original>L</original>
    <variation>F</variation>
    <location>
        <position position="309"/>
    </location>
</feature>
<name>AT1A1_CANLF</name>
<evidence type="ECO:0000250" key="1"/>
<evidence type="ECO:0000250" key="2">
    <source>
        <dbReference type="UniProtKB" id="P05023"/>
    </source>
</evidence>
<evidence type="ECO:0000250" key="3">
    <source>
        <dbReference type="UniProtKB" id="P06685"/>
    </source>
</evidence>
<evidence type="ECO:0000250" key="4">
    <source>
        <dbReference type="UniProtKB" id="Q8VDN2"/>
    </source>
</evidence>
<evidence type="ECO:0000255" key="5"/>
<evidence type="ECO:0000256" key="6">
    <source>
        <dbReference type="SAM" id="MobiDB-lite"/>
    </source>
</evidence>
<evidence type="ECO:0000269" key="7">
    <source>
    </source>
</evidence>
<evidence type="ECO:0000269" key="8">
    <source>
    </source>
</evidence>
<evidence type="ECO:0000305" key="9"/>
<comment type="function">
    <text evidence="2 4">This is the catalytic component of the active enzyme, which catalyzes the hydrolysis of ATP coupled with the exchange of sodium and potassium ions across the plasma membrane. This action creates the electrochemical gradient of sodium and potassium ions, providing the energy for active transport of various nutrients (By similarity). Could also be part of an osmosensory signaling pathway that senses body-fluid sodium levels and controls salt intake behavior as well as voluntary water intake to regulate sodium homeostasis (By similarity).</text>
</comment>
<comment type="catalytic activity">
    <reaction>
        <text>K(+)(out) + Na(+)(in) + ATP + H2O = K(+)(in) + Na(+)(out) + ADP + phosphate + H(+)</text>
        <dbReference type="Rhea" id="RHEA:18353"/>
        <dbReference type="ChEBI" id="CHEBI:15377"/>
        <dbReference type="ChEBI" id="CHEBI:15378"/>
        <dbReference type="ChEBI" id="CHEBI:29101"/>
        <dbReference type="ChEBI" id="CHEBI:29103"/>
        <dbReference type="ChEBI" id="CHEBI:30616"/>
        <dbReference type="ChEBI" id="CHEBI:43474"/>
        <dbReference type="ChEBI" id="CHEBI:456216"/>
        <dbReference type="EC" id="7.2.2.13"/>
    </reaction>
</comment>
<comment type="subunit">
    <text evidence="2 3 4 7 8">The sodium/potassium-transporting ATPase is composed of a catalytic alpha subunit, an auxiliary non-catalytic beta subunit and an additional regulatory subunit. Interacts with regulatory subunit FXYD1 (PubMed:16943195, PubMed:21454534). Interacts with regulatory subunit FXYD3 (By similarity). Interacts with SIK1 (By similarity). Interacts with SLC35G1 and STIM1 (By similarity). Interacts with CLN3; this interaction regulates the sodium/potassium-transporting ATPase complex localization at the plasma membrane (By similarity). Interacts with SCN7A; activates ATP1A1 P-type sodium:potassium-exchanging transporter activity which indirectly signals to nearby neurons to regulate sodium homeostasis (By similarity).</text>
</comment>
<comment type="subcellular location">
    <subcellularLocation>
        <location evidence="4">Cell membrane</location>
        <topology evidence="5">Multi-pass membrane protein</topology>
    </subcellularLocation>
    <subcellularLocation>
        <location evidence="3">Basolateral cell membrane</location>
        <topology evidence="5">Multi-pass membrane protein</topology>
    </subcellularLocation>
    <subcellularLocation>
        <location evidence="2">Cell membrane</location>
        <location evidence="2">Sarcolemma</location>
        <topology evidence="5">Multi-pass membrane protein</topology>
    </subcellularLocation>
    <subcellularLocation>
        <location evidence="3">Cell projection</location>
        <location evidence="3">Axon</location>
    </subcellularLocation>
    <subcellularLocation>
        <location evidence="2">Melanosome</location>
    </subcellularLocation>
</comment>
<comment type="PTM">
    <text evidence="1">Phosphorylation on Tyr-10 modulates pumping activity. Phosphorylation of Ser-941 by PKA modulates the response of ATP1A1 to PKC. Dephosphorylation by protein phosphatase 2A (PP2A) following increases in intracellular sodium, leading to increase catalytic activity (By similarity).</text>
</comment>
<comment type="similarity">
    <text evidence="9">Belongs to the cation transport ATPase (P-type) (TC 3.A.3) family. Type IIC subfamily.</text>
</comment>
<gene>
    <name type="primary">ATP1A1</name>
</gene>